<gene>
    <name evidence="13 17" type="primary">msp1</name>
    <name type="ORF">SPBC1718.06</name>
</gene>
<proteinExistence type="evidence at protein level"/>
<organism>
    <name type="scientific">Schizosaccharomyces pombe (strain 972 / ATCC 24843)</name>
    <name type="common">Fission yeast</name>
    <dbReference type="NCBI Taxonomy" id="284812"/>
    <lineage>
        <taxon>Eukaryota</taxon>
        <taxon>Fungi</taxon>
        <taxon>Dikarya</taxon>
        <taxon>Ascomycota</taxon>
        <taxon>Taphrinomycotina</taxon>
        <taxon>Schizosaccharomycetes</taxon>
        <taxon>Schizosaccharomycetales</taxon>
        <taxon>Schizosaccharomycetaceae</taxon>
        <taxon>Schizosaccharomyces</taxon>
    </lineage>
</organism>
<protein>
    <recommendedName>
        <fullName>Dynamin-like GTPase msp1, mitochondrial</fullName>
        <ecNumber evidence="16">3.6.5.5</ecNumber>
    </recommendedName>
    <component>
        <recommendedName>
            <fullName>Dynamin-like GTPase msp1, long form</fullName>
            <shortName>l-msp1</shortName>
        </recommendedName>
    </component>
    <component>
        <recommendedName>
            <fullName>Dynamin-like GTPase msp1, small form</fullName>
            <shortName>s-msp1</shortName>
        </recommendedName>
    </component>
</protein>
<comment type="function">
    <text evidence="3 8 9 10 11 12">Dynamin-related GTPase that is essential for normal mitochondrial morphology by mediating fusion of the mitochondrial inner membranes and maintaining respiratory chain function (PubMed:15710398, PubMed:19567474, PubMed:27664110, PubMed:9790976, PubMed:9928955). Exists in two forms: the transmembrane, long form (Dynamin-like GTPase msp1, long form; l-msp1), which is tethered to the inner mitochondrial membrane, and the short soluble form (Dynamin-like GTPase msp1, short form; s-msp1), which results from proteolytic cleavage and localizes in the intermembrane space (PubMed:19567474). Both forms (l-msp1 and s-msp1) cooperate to catalyze the fusion of the mitochondrial inner membrane (By similarity). Its role in mitochondrial morphology is required for mitochondrial genome maintenance (PubMed:27664110).</text>
</comment>
<comment type="function">
    <molecule>Dynamin-like GTPase msp1, long form</molecule>
    <text evidence="2 3 9">Constitutes the transmembrane long form (l-msp1) that plays a central role in mitochondrial inner membrane fusion (PubMed:19567474). L-msp1 and the soluble short form (s-msp1) form higher-order helical assemblies that coordinate the fusion of mitochondrial inner membranes (By similarity). Inner membrane-anchored l-msp1 molecules initiate membrane remodeling by recruiting soluble s-msp1 to rapidly polymerize into a flexible cylindrical scaffold encaging the mitochondrial inner membrane (By similarity). Once at the membrane surface, the formation of s-msp1 helices induce bilayer curvature (By similarity). Msp1 dimerization through the paddle region, which inserts into cardiolipin-containing membrane, promotes GTP hydrolysis and the helical assembly of a flexible msp1 lattice on the membrane, which drives membrane curvature and mitochondrial fusion (By similarity).</text>
</comment>
<comment type="function">
    <molecule>Dynamin-like GTPase msp1, small form</molecule>
    <text evidence="2 3 9">Constitutes the soluble short form (s-msp1) generated by cleavage, which plays a central role in mitochondrial inner membrane fusion (PubMed:19567474). The transmembrane long form (l-msp1) and the s-msp1 form higher-order helical assemblies that coordinate the fusion of mitochondrial inner membranes (By similarity). Inner membrane-anchored l-msp1 molecules initiate membrane remodeling by recruiting soluble s-msp1 to rapidly polymerize into a flexible cylindrical scaffold encaging the mitochondrial inner membrane (By similarity). Once at the membrane surface, the formation of s-msp1 helices induce bilayer curvature (By similarity). Msp1 dimerization through the paddle region, which inserts into cardiolipin-containing membrane, promotes GTP hydrolysis and the helical assembly of a flexible msp1 lattice on the membrane, which drives membrane curvature and mitochondrial fusion (By similarity).</text>
</comment>
<comment type="catalytic activity">
    <reaction evidence="16">
        <text>GTP + H2O = GDP + phosphate + H(+)</text>
        <dbReference type="Rhea" id="RHEA:19669"/>
        <dbReference type="ChEBI" id="CHEBI:15377"/>
        <dbReference type="ChEBI" id="CHEBI:15378"/>
        <dbReference type="ChEBI" id="CHEBI:37565"/>
        <dbReference type="ChEBI" id="CHEBI:43474"/>
        <dbReference type="ChEBI" id="CHEBI:58189"/>
        <dbReference type="EC" id="3.6.5.5"/>
    </reaction>
</comment>
<comment type="subunit">
    <text evidence="3 12">Homooligomer (By similarity). Interacts with cdr1 (PubMed:9928955).</text>
</comment>
<comment type="subcellular location">
    <molecule>Dynamin-like GTPase msp1, long form</molecule>
    <subcellularLocation>
        <location evidence="9">Mitochondrion inner membrane</location>
        <topology evidence="9">Multi-pass membrane protein</topology>
    </subcellularLocation>
</comment>
<comment type="subcellular location">
    <molecule>Dynamin-like GTPase msp1, small form</molecule>
    <subcellularLocation>
        <location evidence="8 9">Mitochondrion intermembrane space</location>
    </subcellularLocation>
</comment>
<comment type="domain">
    <text evidence="1">The paddle region plays a major role in driving mitochondrial inner membrane fusion (By similarity). It binds lipid membranes enriched in negatively charged phospholipids, such as cardiolipin, and promotes membrane tubulation (By similarity). Msp1 dimerization through the paddle domain promotes the helical assembly of a flexible msp1 lattice on the membrane, driving mitochondrial fusion in cells (By similarity).</text>
</comment>
<comment type="PTM">
    <text evidence="3">Cleavage of the transit peptide by mitochondrial processing protease (MPP) produces a long integral membrane form of msp1 (l-msp1) (By similarity). Further processing by a rhomboid protease after the transmembrane regions produces a short peripheral membrane form of msp1 (s-msp1) (By similarity). Both isoforms are required for full activity (By similarity).</text>
</comment>
<comment type="similarity">
    <text evidence="6">Belongs to the TRAFAC class dynamin-like GTPase superfamily. Dynamin/Fzo/YdjA family.</text>
</comment>
<sequence length="903" mass="101901">MGISWFLSRFRIRTVAPSSFLKPRGLVYRPSQIRRRVSLLSLSGFHPYRAYSILGPKTPTAFNSANTVRFFSFSSISRLVFRSLRLPVAGFSLVAGGAAYIGAQVQRASDYTKDIFDKTFGILDSTWEKTRETVASVTNVQLPEISMPLWLEKILRLDEESAERRRVLQAERAKEHRSNSNDKQKSSDNDEDPNDTTVGIGAALAASILSVDSVDGEDTLTADEKRKLAQESKEDRMMLFTKKMIEIRNILQDIQDNNSAVTLPSIVVIGSQSSGKSSVLEAIVGHEFLPKGSNMVTRRPIELTLVHSADTAIPYGEFSGVQLGKITDFSKIQHILTDLNMAVPSSQGVDDNPIRLTIYASHIPNLSLIDLPGYIQIHSEDQPADLDMKISKLCEKYIREPNIILAVCAADVDLANSAALRASRRVDPLGLRTIGVVTKMDLVPPSKAISILHNNNYPLHYGYIGVISRIVPTGRFSAGQNLTDLVSTQENSYFSTHQQFADARIGNYLGIQSLRKCLINVLEYTMSKNLQHTADSIRTELEECNYQYKVQYNDRVLTADSYIAEGLDIFKAAFKEFTQKFGKSEVRDLLKSSLNEKVMDLLAERYWTDDDISNWSKHTNALDEHWKYKLDSCVSTLTRMGLGRVSTLLVTDSISKCIDEITKASPFADHPAAMQYIMNAAQDILRRRFHATSEQVENCVKPYKYDVEVNDDEWKSSRGQAEKLLQRELGLCQSALEKIKNAVGSRRMNQVLQYLEEQKTSSEPLPASYSTALLEQGRMLQYLKMREDILKLRISVLKSRACKHKEAKYTCPEIFLNAVSDKLVNTAVLFINIELLSEFYYQFPRELDQRLIHSLSSEQLNAFVNENPRLKSQLQLQHKRQCLELALQKINSLVILEQQADSD</sequence>
<name>MSP1_SCHPO</name>
<reference key="1">
    <citation type="journal article" date="1998" name="Biochem. Biophys. Res. Commun.">
        <title>Identification of a fission yeast dynamin-related protein involved in mitochondrial DNA maintenance.</title>
        <authorList>
            <person name="Pelloquin L."/>
            <person name="Belenguer P."/>
            <person name="Menon Y."/>
            <person name="Ducommun B."/>
        </authorList>
    </citation>
    <scope>NUCLEOTIDE SEQUENCE [GENOMIC DNA]</scope>
    <scope>FUNCTION</scope>
</reference>
<reference key="2">
    <citation type="journal article" date="2002" name="Nature">
        <title>The genome sequence of Schizosaccharomyces pombe.</title>
        <authorList>
            <person name="Wood V."/>
            <person name="Gwilliam R."/>
            <person name="Rajandream M.A."/>
            <person name="Lyne M.H."/>
            <person name="Lyne R."/>
            <person name="Stewart A."/>
            <person name="Sgouros J.G."/>
            <person name="Peat N."/>
            <person name="Hayles J."/>
            <person name="Baker S.G."/>
            <person name="Basham D."/>
            <person name="Bowman S."/>
            <person name="Brooks K."/>
            <person name="Brown D."/>
            <person name="Brown S."/>
            <person name="Chillingworth T."/>
            <person name="Churcher C.M."/>
            <person name="Collins M."/>
            <person name="Connor R."/>
            <person name="Cronin A."/>
            <person name="Davis P."/>
            <person name="Feltwell T."/>
            <person name="Fraser A."/>
            <person name="Gentles S."/>
            <person name="Goble A."/>
            <person name="Hamlin N."/>
            <person name="Harris D.E."/>
            <person name="Hidalgo J."/>
            <person name="Hodgson G."/>
            <person name="Holroyd S."/>
            <person name="Hornsby T."/>
            <person name="Howarth S."/>
            <person name="Huckle E.J."/>
            <person name="Hunt S."/>
            <person name="Jagels K."/>
            <person name="James K.D."/>
            <person name="Jones L."/>
            <person name="Jones M."/>
            <person name="Leather S."/>
            <person name="McDonald S."/>
            <person name="McLean J."/>
            <person name="Mooney P."/>
            <person name="Moule S."/>
            <person name="Mungall K.L."/>
            <person name="Murphy L.D."/>
            <person name="Niblett D."/>
            <person name="Odell C."/>
            <person name="Oliver K."/>
            <person name="O'Neil S."/>
            <person name="Pearson D."/>
            <person name="Quail M.A."/>
            <person name="Rabbinowitsch E."/>
            <person name="Rutherford K.M."/>
            <person name="Rutter S."/>
            <person name="Saunders D."/>
            <person name="Seeger K."/>
            <person name="Sharp S."/>
            <person name="Skelton J."/>
            <person name="Simmonds M.N."/>
            <person name="Squares R."/>
            <person name="Squares S."/>
            <person name="Stevens K."/>
            <person name="Taylor K."/>
            <person name="Taylor R.G."/>
            <person name="Tivey A."/>
            <person name="Walsh S.V."/>
            <person name="Warren T."/>
            <person name="Whitehead S."/>
            <person name="Woodward J.R."/>
            <person name="Volckaert G."/>
            <person name="Aert R."/>
            <person name="Robben J."/>
            <person name="Grymonprez B."/>
            <person name="Weltjens I."/>
            <person name="Vanstreels E."/>
            <person name="Rieger M."/>
            <person name="Schaefer M."/>
            <person name="Mueller-Auer S."/>
            <person name="Gabel C."/>
            <person name="Fuchs M."/>
            <person name="Duesterhoeft A."/>
            <person name="Fritzc C."/>
            <person name="Holzer E."/>
            <person name="Moestl D."/>
            <person name="Hilbert H."/>
            <person name="Borzym K."/>
            <person name="Langer I."/>
            <person name="Beck A."/>
            <person name="Lehrach H."/>
            <person name="Reinhardt R."/>
            <person name="Pohl T.M."/>
            <person name="Eger P."/>
            <person name="Zimmermann W."/>
            <person name="Wedler H."/>
            <person name="Wambutt R."/>
            <person name="Purnelle B."/>
            <person name="Goffeau A."/>
            <person name="Cadieu E."/>
            <person name="Dreano S."/>
            <person name="Gloux S."/>
            <person name="Lelaure V."/>
            <person name="Mottier S."/>
            <person name="Galibert F."/>
            <person name="Aves S.J."/>
            <person name="Xiang Z."/>
            <person name="Hunt C."/>
            <person name="Moore K."/>
            <person name="Hurst S.M."/>
            <person name="Lucas M."/>
            <person name="Rochet M."/>
            <person name="Gaillardin C."/>
            <person name="Tallada V.A."/>
            <person name="Garzon A."/>
            <person name="Thode G."/>
            <person name="Daga R.R."/>
            <person name="Cruzado L."/>
            <person name="Jimenez J."/>
            <person name="Sanchez M."/>
            <person name="del Rey F."/>
            <person name="Benito J."/>
            <person name="Dominguez A."/>
            <person name="Revuelta J.L."/>
            <person name="Moreno S."/>
            <person name="Armstrong J."/>
            <person name="Forsburg S.L."/>
            <person name="Cerutti L."/>
            <person name="Lowe T."/>
            <person name="McCombie W.R."/>
            <person name="Paulsen I."/>
            <person name="Potashkin J."/>
            <person name="Shpakovski G.V."/>
            <person name="Ussery D."/>
            <person name="Barrell B.G."/>
            <person name="Nurse P."/>
        </authorList>
    </citation>
    <scope>NUCLEOTIDE SEQUENCE [LARGE SCALE GENOMIC DNA]</scope>
    <source>
        <strain>972 / ATCC 24843</strain>
    </source>
</reference>
<reference key="3">
    <citation type="journal article" date="1999" name="FEBS Lett.">
        <title>Interaction between the fission yeast nim1/cdr1 protein kinase and a dynamin-related protein.</title>
        <authorList>
            <person name="Pelloquin L."/>
            <person name="Ducommun B."/>
            <person name="Belenguer P."/>
        </authorList>
    </citation>
    <scope>FUNCTION</scope>
    <scope>INTERACTION WITH CDR1</scope>
</reference>
<reference key="4">
    <citation type="journal article" date="2005" name="FEBS Lett.">
        <title>Msp1p is an intermembrane space dynamin-related protein that mediates mitochondrial fusion in a Dnm1p-dependent manner in S. pombe.</title>
        <authorList>
            <person name="Guillou E."/>
            <person name="Bousquet C."/>
            <person name="Daloyau M."/>
            <person name="Emorine L.J."/>
            <person name="Belenguer P."/>
        </authorList>
    </citation>
    <scope>FUNCTION</scope>
    <scope>SUBCELLULAR LOCATION</scope>
</reference>
<reference key="5">
    <citation type="journal article" date="2009" name="J. Cell Sci.">
        <title>Transmembrane segments of the dynamin Msp1p uncouple its functions in the control of mitochondrial morphology and genome maintenance.</title>
        <authorList>
            <person name="Diot A."/>
            <person name="Guillou E."/>
            <person name="Daloyau M."/>
            <person name="Arnaune-Pelloquin L."/>
            <person name="Emorine L.J."/>
            <person name="Belenguer P."/>
        </authorList>
    </citation>
    <scope>FUNCTION</scope>
    <scope>SUBCELLULAR LOCATION</scope>
    <scope>MUTAGENESIS OF 192-ASP--ASP-215</scope>
</reference>
<reference key="6">
    <citation type="journal article" date="2016" name="FEBS Lett.">
        <title>Loss of Msp1p in Schizosaccharomyces pombe induces a ROS-dependent nuclear mutator phenotype that affects mitochondrial fission genes.</title>
        <authorList>
            <person name="Delerue T."/>
            <person name="Khosrobakhsh F."/>
            <person name="Daloyau M."/>
            <person name="Emorine L.J."/>
            <person name="Dedieu A."/>
            <person name="Herbert C.J."/>
            <person name="Bonnefoy N."/>
            <person name="Arnaune-Pelloquin L."/>
            <person name="Belenguer P."/>
        </authorList>
    </citation>
    <scope>FUNCTION</scope>
    <scope>CATALYTIC ACTIVITY</scope>
    <scope>MUTAGENESIS OF PRO-300</scope>
</reference>
<dbReference type="EC" id="3.6.5.5" evidence="16"/>
<dbReference type="EMBL" id="Y07891">
    <property type="protein sequence ID" value="CAA69196.1"/>
    <property type="molecule type" value="Genomic_DNA"/>
</dbReference>
<dbReference type="EMBL" id="CU329671">
    <property type="protein sequence ID" value="CAB75996.1"/>
    <property type="molecule type" value="Genomic_DNA"/>
</dbReference>
<dbReference type="PIR" id="JE0327">
    <property type="entry name" value="JE0327"/>
</dbReference>
<dbReference type="PIR" id="T50334">
    <property type="entry name" value="T50334"/>
</dbReference>
<dbReference type="RefSeq" id="NP_596452.1">
    <property type="nucleotide sequence ID" value="NM_001022371.2"/>
</dbReference>
<dbReference type="SMR" id="P87320"/>
<dbReference type="BioGRID" id="276392">
    <property type="interactions" value="5"/>
</dbReference>
<dbReference type="FunCoup" id="P87320">
    <property type="interactions" value="21"/>
</dbReference>
<dbReference type="STRING" id="284812.P87320"/>
<dbReference type="iPTMnet" id="P87320"/>
<dbReference type="PaxDb" id="4896-SPBC1718.06.1"/>
<dbReference type="EnsemblFungi" id="SPBC1718.06.1">
    <property type="protein sequence ID" value="SPBC1718.06.1:pep"/>
    <property type="gene ID" value="SPBC1718.06"/>
</dbReference>
<dbReference type="GeneID" id="2539844"/>
<dbReference type="KEGG" id="spo:2539844"/>
<dbReference type="PomBase" id="SPBC1718.06">
    <property type="gene designation" value="msp1"/>
</dbReference>
<dbReference type="VEuPathDB" id="FungiDB:SPBC1718.06"/>
<dbReference type="eggNOG" id="KOG0446">
    <property type="taxonomic scope" value="Eukaryota"/>
</dbReference>
<dbReference type="HOGENOM" id="CLU_008640_0_0_1"/>
<dbReference type="InParanoid" id="P87320"/>
<dbReference type="OMA" id="PLKMGYV"/>
<dbReference type="PhylomeDB" id="P87320"/>
<dbReference type="Reactome" id="R-SPO-169911">
    <property type="pathway name" value="Regulation of Apoptosis"/>
</dbReference>
<dbReference type="PRO" id="PR:P87320"/>
<dbReference type="Proteomes" id="UP000002485">
    <property type="component" value="Chromosome II"/>
</dbReference>
<dbReference type="GO" id="GO:0005737">
    <property type="term" value="C:cytoplasm"/>
    <property type="evidence" value="ECO:0000318"/>
    <property type="project" value="GO_Central"/>
</dbReference>
<dbReference type="GO" id="GO:0000329">
    <property type="term" value="C:fungal-type vacuole membrane"/>
    <property type="evidence" value="ECO:0007005"/>
    <property type="project" value="PomBase"/>
</dbReference>
<dbReference type="GO" id="GO:0005874">
    <property type="term" value="C:microtubule"/>
    <property type="evidence" value="ECO:0000318"/>
    <property type="project" value="GO_Central"/>
</dbReference>
<dbReference type="GO" id="GO:0005743">
    <property type="term" value="C:mitochondrial inner membrane"/>
    <property type="evidence" value="ECO:0000314"/>
    <property type="project" value="UniProtKB"/>
</dbReference>
<dbReference type="GO" id="GO:0005758">
    <property type="term" value="C:mitochondrial intermembrane space"/>
    <property type="evidence" value="ECO:0000314"/>
    <property type="project" value="UniProtKB"/>
</dbReference>
<dbReference type="GO" id="GO:0005886">
    <property type="term" value="C:plasma membrane"/>
    <property type="evidence" value="ECO:0000318"/>
    <property type="project" value="GO_Central"/>
</dbReference>
<dbReference type="GO" id="GO:0005525">
    <property type="term" value="F:GTP binding"/>
    <property type="evidence" value="ECO:0000255"/>
    <property type="project" value="PomBase"/>
</dbReference>
<dbReference type="GO" id="GO:0003924">
    <property type="term" value="F:GTPase activity"/>
    <property type="evidence" value="ECO:0000318"/>
    <property type="project" value="GO_Central"/>
</dbReference>
<dbReference type="GO" id="GO:0046872">
    <property type="term" value="F:metal ion binding"/>
    <property type="evidence" value="ECO:0007669"/>
    <property type="project" value="UniProtKB-KW"/>
</dbReference>
<dbReference type="GO" id="GO:0008017">
    <property type="term" value="F:microtubule binding"/>
    <property type="evidence" value="ECO:0000318"/>
    <property type="project" value="GO_Central"/>
</dbReference>
<dbReference type="GO" id="GO:0008053">
    <property type="term" value="P:mitochondrial fusion"/>
    <property type="evidence" value="ECO:0000315"/>
    <property type="project" value="PomBase"/>
</dbReference>
<dbReference type="GO" id="GO:1990627">
    <property type="term" value="P:mitochondrial inner membrane fusion"/>
    <property type="evidence" value="ECO:0000314"/>
    <property type="project" value="UniProtKB"/>
</dbReference>
<dbReference type="GO" id="GO:0007005">
    <property type="term" value="P:mitochondrion organization"/>
    <property type="evidence" value="ECO:0000314"/>
    <property type="project" value="UniProtKB"/>
</dbReference>
<dbReference type="GO" id="GO:0031623">
    <property type="term" value="P:receptor internalization"/>
    <property type="evidence" value="ECO:0000318"/>
    <property type="project" value="GO_Central"/>
</dbReference>
<dbReference type="CDD" id="cd08771">
    <property type="entry name" value="DLP_1"/>
    <property type="match status" value="1"/>
</dbReference>
<dbReference type="FunFam" id="3.40.50.300:FF:000741">
    <property type="entry name" value="Putative mitochondrial dynamin GTPase"/>
    <property type="match status" value="1"/>
</dbReference>
<dbReference type="Gene3D" id="3.40.50.300">
    <property type="entry name" value="P-loop containing nucleotide triphosphate hydrolases"/>
    <property type="match status" value="1"/>
</dbReference>
<dbReference type="InterPro" id="IPR022812">
    <property type="entry name" value="Dynamin"/>
</dbReference>
<dbReference type="InterPro" id="IPR001401">
    <property type="entry name" value="Dynamin_GTPase"/>
</dbReference>
<dbReference type="InterPro" id="IPR019762">
    <property type="entry name" value="Dynamin_GTPase_CS"/>
</dbReference>
<dbReference type="InterPro" id="IPR045063">
    <property type="entry name" value="Dynamin_N"/>
</dbReference>
<dbReference type="InterPro" id="IPR000375">
    <property type="entry name" value="Dynamin_stalk"/>
</dbReference>
<dbReference type="InterPro" id="IPR030381">
    <property type="entry name" value="G_DYNAMIN_dom"/>
</dbReference>
<dbReference type="InterPro" id="IPR020850">
    <property type="entry name" value="GED_dom"/>
</dbReference>
<dbReference type="InterPro" id="IPR056495">
    <property type="entry name" value="LIS_MGM1"/>
</dbReference>
<dbReference type="InterPro" id="IPR027417">
    <property type="entry name" value="P-loop_NTPase"/>
</dbReference>
<dbReference type="PANTHER" id="PTHR11566">
    <property type="entry name" value="DYNAMIN"/>
    <property type="match status" value="1"/>
</dbReference>
<dbReference type="PANTHER" id="PTHR11566:SF212">
    <property type="entry name" value="DYNAMIN"/>
    <property type="match status" value="1"/>
</dbReference>
<dbReference type="Pfam" id="PF01031">
    <property type="entry name" value="Dynamin_M"/>
    <property type="match status" value="1"/>
</dbReference>
<dbReference type="Pfam" id="PF00350">
    <property type="entry name" value="Dynamin_N"/>
    <property type="match status" value="1"/>
</dbReference>
<dbReference type="Pfam" id="PF24550">
    <property type="entry name" value="LIS_MGM1"/>
    <property type="match status" value="1"/>
</dbReference>
<dbReference type="PRINTS" id="PR00195">
    <property type="entry name" value="DYNAMIN"/>
</dbReference>
<dbReference type="SMART" id="SM00053">
    <property type="entry name" value="DYNc"/>
    <property type="match status" value="1"/>
</dbReference>
<dbReference type="SUPFAM" id="SSF52540">
    <property type="entry name" value="P-loop containing nucleoside triphosphate hydrolases"/>
    <property type="match status" value="1"/>
</dbReference>
<dbReference type="PROSITE" id="PS00410">
    <property type="entry name" value="G_DYNAMIN_1"/>
    <property type="match status" value="1"/>
</dbReference>
<dbReference type="PROSITE" id="PS51718">
    <property type="entry name" value="G_DYNAMIN_2"/>
    <property type="match status" value="1"/>
</dbReference>
<dbReference type="PROSITE" id="PS51388">
    <property type="entry name" value="GED"/>
    <property type="match status" value="1"/>
</dbReference>
<evidence type="ECO:0000250" key="1">
    <source>
        <dbReference type="UniProtKB" id="G0SGC7"/>
    </source>
</evidence>
<evidence type="ECO:0000250" key="2">
    <source>
        <dbReference type="UniProtKB" id="O60313"/>
    </source>
</evidence>
<evidence type="ECO:0000250" key="3">
    <source>
        <dbReference type="UniProtKB" id="P32266"/>
    </source>
</evidence>
<evidence type="ECO:0000255" key="4"/>
<evidence type="ECO:0000255" key="5">
    <source>
        <dbReference type="PROSITE-ProRule" id="PRU00720"/>
    </source>
</evidence>
<evidence type="ECO:0000255" key="6">
    <source>
        <dbReference type="PROSITE-ProRule" id="PRU01055"/>
    </source>
</evidence>
<evidence type="ECO:0000256" key="7">
    <source>
        <dbReference type="SAM" id="MobiDB-lite"/>
    </source>
</evidence>
<evidence type="ECO:0000269" key="8">
    <source>
    </source>
</evidence>
<evidence type="ECO:0000269" key="9">
    <source>
    </source>
</evidence>
<evidence type="ECO:0000269" key="10">
    <source>
    </source>
</evidence>
<evidence type="ECO:0000269" key="11">
    <source>
    </source>
</evidence>
<evidence type="ECO:0000269" key="12">
    <source>
    </source>
</evidence>
<evidence type="ECO:0000303" key="13">
    <source>
    </source>
</evidence>
<evidence type="ECO:0000305" key="14"/>
<evidence type="ECO:0000305" key="15">
    <source>
    </source>
</evidence>
<evidence type="ECO:0000305" key="16">
    <source>
    </source>
</evidence>
<evidence type="ECO:0000312" key="17">
    <source>
        <dbReference type="PomBase" id="SPBC1718.06"/>
    </source>
</evidence>
<accession>P87320</accession>
<accession>Q9P7N8</accession>
<feature type="transit peptide" description="Mitochondrion" evidence="4">
    <location>
        <begin position="1"/>
        <end position="78"/>
    </location>
</feature>
<feature type="chain" id="PRO_0000007402" description="Dynamin-like GTPase msp1, long form" evidence="15">
    <location>
        <begin position="79"/>
        <end position="903"/>
    </location>
</feature>
<feature type="chain" id="PRO_0000460454" description="Dynamin-like GTPase msp1, small form" evidence="15">
    <location>
        <begin status="unknown"/>
        <end position="903"/>
    </location>
</feature>
<feature type="transmembrane region" description="Helical" evidence="4">
    <location>
        <begin position="86"/>
        <end position="103"/>
    </location>
</feature>
<feature type="transmembrane region" description="Helical" evidence="4">
    <location>
        <begin position="198"/>
        <end position="214"/>
    </location>
</feature>
<feature type="domain" description="Dynamin-type G" evidence="6">
    <location>
        <begin position="260"/>
        <end position="531"/>
    </location>
</feature>
<feature type="domain" description="GED" evidence="5">
    <location>
        <begin position="805"/>
        <end position="898"/>
    </location>
</feature>
<feature type="region of interest" description="Disordered" evidence="7">
    <location>
        <begin position="167"/>
        <end position="198"/>
    </location>
</feature>
<feature type="region of interest" description="G1 motif" evidence="6">
    <location>
        <begin position="270"/>
        <end position="277"/>
    </location>
</feature>
<feature type="region of interest" description="G2 motif" evidence="6">
    <location>
        <begin position="296"/>
        <end position="298"/>
    </location>
</feature>
<feature type="region of interest" description="G3 motif" evidence="6">
    <location>
        <begin position="370"/>
        <end position="373"/>
    </location>
</feature>
<feature type="region of interest" description="G4 motif" evidence="6">
    <location>
        <begin position="438"/>
        <end position="441"/>
    </location>
</feature>
<feature type="region of interest" description="G5 motif" evidence="6">
    <location>
        <begin position="467"/>
        <end position="470"/>
    </location>
</feature>
<feature type="region of interest" description="Paddle region" evidence="2">
    <location>
        <begin position="691"/>
        <end position="805"/>
    </location>
</feature>
<feature type="compositionally biased region" description="Basic and acidic residues" evidence="7">
    <location>
        <begin position="167"/>
        <end position="188"/>
    </location>
</feature>
<feature type="binding site" evidence="3">
    <location>
        <position position="273"/>
    </location>
    <ligand>
        <name>GTP</name>
        <dbReference type="ChEBI" id="CHEBI:37565"/>
    </ligand>
</feature>
<feature type="binding site" evidence="3">
    <location>
        <position position="274"/>
    </location>
    <ligand>
        <name>GTP</name>
        <dbReference type="ChEBI" id="CHEBI:37565"/>
    </ligand>
</feature>
<feature type="binding site" evidence="3">
    <location>
        <position position="275"/>
    </location>
    <ligand>
        <name>GTP</name>
        <dbReference type="ChEBI" id="CHEBI:37565"/>
    </ligand>
</feature>
<feature type="binding site" evidence="3">
    <location>
        <position position="276"/>
    </location>
    <ligand>
        <name>GTP</name>
        <dbReference type="ChEBI" id="CHEBI:37565"/>
    </ligand>
</feature>
<feature type="binding site" evidence="3">
    <location>
        <position position="277"/>
    </location>
    <ligand>
        <name>GTP</name>
        <dbReference type="ChEBI" id="CHEBI:37565"/>
    </ligand>
</feature>
<feature type="binding site" evidence="2">
    <location>
        <position position="277"/>
    </location>
    <ligand>
        <name>Mg(2+)</name>
        <dbReference type="ChEBI" id="CHEBI:18420"/>
    </ligand>
</feature>
<feature type="binding site" evidence="3">
    <location>
        <position position="278"/>
    </location>
    <ligand>
        <name>GTP</name>
        <dbReference type="ChEBI" id="CHEBI:37565"/>
    </ligand>
</feature>
<feature type="binding site" evidence="2">
    <location>
        <position position="292"/>
    </location>
    <ligand>
        <name>GTP</name>
        <dbReference type="ChEBI" id="CHEBI:37565"/>
    </ligand>
</feature>
<feature type="binding site" evidence="2">
    <location>
        <position position="297"/>
    </location>
    <ligand>
        <name>Mg(2+)</name>
        <dbReference type="ChEBI" id="CHEBI:18420"/>
    </ligand>
</feature>
<feature type="binding site" evidence="2">
    <location>
        <position position="370"/>
    </location>
    <ligand>
        <name>Mg(2+)</name>
        <dbReference type="ChEBI" id="CHEBI:18420"/>
    </ligand>
</feature>
<feature type="binding site" evidence="3">
    <location>
        <position position="439"/>
    </location>
    <ligand>
        <name>GTP</name>
        <dbReference type="ChEBI" id="CHEBI:37565"/>
    </ligand>
</feature>
<feature type="binding site" evidence="3">
    <location>
        <position position="441"/>
    </location>
    <ligand>
        <name>GTP</name>
        <dbReference type="ChEBI" id="CHEBI:37565"/>
    </ligand>
</feature>
<feature type="binding site" evidence="3">
    <location>
        <position position="468"/>
    </location>
    <ligand>
        <name>GTP</name>
        <dbReference type="ChEBI" id="CHEBI:37565"/>
    </ligand>
</feature>
<feature type="disulfide bond" evidence="3">
    <location>
        <begin position="802"/>
        <end position="811"/>
    </location>
</feature>
<feature type="mutagenesis site" description="Induces lethality." evidence="9">
    <location>
        <begin position="192"/>
        <end position="215"/>
    </location>
</feature>
<feature type="mutagenesis site" description="Temperature-sensitive mutant; multiple phenotypes, including growth delay, fragmentation of mitochondria, a reduction in the number of mitochondrial nucleoids and the amount of mtDNA, and a decrease in respiratory capacity." evidence="10">
    <original>P</original>
    <variation>S</variation>
    <location>
        <position position="300"/>
    </location>
</feature>
<feature type="sequence conflict" description="In Ref. 1; CAA69196." evidence="14" ref="1">
    <original>R</original>
    <variation>L</variation>
    <location>
        <position position="869"/>
    </location>
</feature>
<keyword id="KW-1015">Disulfide bond</keyword>
<keyword id="KW-0342">GTP-binding</keyword>
<keyword id="KW-0378">Hydrolase</keyword>
<keyword id="KW-0460">Magnesium</keyword>
<keyword id="KW-0472">Membrane</keyword>
<keyword id="KW-0479">Metal-binding</keyword>
<keyword id="KW-0496">Mitochondrion</keyword>
<keyword id="KW-0999">Mitochondrion inner membrane</keyword>
<keyword id="KW-0547">Nucleotide-binding</keyword>
<keyword id="KW-1185">Reference proteome</keyword>
<keyword id="KW-0735">Signal-anchor</keyword>
<keyword id="KW-0809">Transit peptide</keyword>
<keyword id="KW-0812">Transmembrane</keyword>
<keyword id="KW-1133">Transmembrane helix</keyword>